<proteinExistence type="inferred from homology"/>
<gene>
    <name evidence="1" type="primary">ndk</name>
    <name type="ordered locus">Francci3_1210</name>
</gene>
<keyword id="KW-0067">ATP-binding</keyword>
<keyword id="KW-0963">Cytoplasm</keyword>
<keyword id="KW-0418">Kinase</keyword>
<keyword id="KW-0460">Magnesium</keyword>
<keyword id="KW-0479">Metal-binding</keyword>
<keyword id="KW-0546">Nucleotide metabolism</keyword>
<keyword id="KW-0547">Nucleotide-binding</keyword>
<keyword id="KW-0597">Phosphoprotein</keyword>
<keyword id="KW-1185">Reference proteome</keyword>
<keyword id="KW-0808">Transferase</keyword>
<protein>
    <recommendedName>
        <fullName evidence="1">Nucleoside diphosphate kinase</fullName>
        <shortName evidence="1">NDK</shortName>
        <shortName evidence="1">NDP kinase</shortName>
        <ecNumber evidence="1">2.7.4.6</ecNumber>
    </recommendedName>
    <alternativeName>
        <fullName evidence="1">Nucleoside-2-P kinase</fullName>
    </alternativeName>
</protein>
<reference key="1">
    <citation type="journal article" date="2007" name="Genome Res.">
        <title>Genome characteristics of facultatively symbiotic Frankia sp. strains reflect host range and host plant biogeography.</title>
        <authorList>
            <person name="Normand P."/>
            <person name="Lapierre P."/>
            <person name="Tisa L.S."/>
            <person name="Gogarten J.P."/>
            <person name="Alloisio N."/>
            <person name="Bagnarol E."/>
            <person name="Bassi C.A."/>
            <person name="Berry A.M."/>
            <person name="Bickhart D.M."/>
            <person name="Choisne N."/>
            <person name="Couloux A."/>
            <person name="Cournoyer B."/>
            <person name="Cruveiller S."/>
            <person name="Daubin V."/>
            <person name="Demange N."/>
            <person name="Francino M.P."/>
            <person name="Goltsman E."/>
            <person name="Huang Y."/>
            <person name="Kopp O.R."/>
            <person name="Labarre L."/>
            <person name="Lapidus A."/>
            <person name="Lavire C."/>
            <person name="Marechal J."/>
            <person name="Martinez M."/>
            <person name="Mastronunzio J.E."/>
            <person name="Mullin B.C."/>
            <person name="Niemann J."/>
            <person name="Pujic P."/>
            <person name="Rawnsley T."/>
            <person name="Rouy Z."/>
            <person name="Schenowitz C."/>
            <person name="Sellstedt A."/>
            <person name="Tavares F."/>
            <person name="Tomkins J.P."/>
            <person name="Vallenet D."/>
            <person name="Valverde C."/>
            <person name="Wall L.G."/>
            <person name="Wang Y."/>
            <person name="Medigue C."/>
            <person name="Benson D.R."/>
        </authorList>
    </citation>
    <scope>NUCLEOTIDE SEQUENCE [LARGE SCALE GENOMIC DNA]</scope>
    <source>
        <strain>DSM 45818 / CECT 9043 / HFP020203 / CcI3</strain>
    </source>
</reference>
<organism>
    <name type="scientific">Frankia casuarinae (strain DSM 45818 / CECT 9043 / HFP020203 / CcI3)</name>
    <dbReference type="NCBI Taxonomy" id="106370"/>
    <lineage>
        <taxon>Bacteria</taxon>
        <taxon>Bacillati</taxon>
        <taxon>Actinomycetota</taxon>
        <taxon>Actinomycetes</taxon>
        <taxon>Frankiales</taxon>
        <taxon>Frankiaceae</taxon>
        <taxon>Frankia</taxon>
    </lineage>
</organism>
<feature type="chain" id="PRO_0000242499" description="Nucleoside diphosphate kinase">
    <location>
        <begin position="1"/>
        <end position="137"/>
    </location>
</feature>
<feature type="active site" description="Pros-phosphohistidine intermediate" evidence="1">
    <location>
        <position position="117"/>
    </location>
</feature>
<feature type="binding site" evidence="1">
    <location>
        <position position="11"/>
    </location>
    <ligand>
        <name>ATP</name>
        <dbReference type="ChEBI" id="CHEBI:30616"/>
    </ligand>
</feature>
<feature type="binding site" evidence="1">
    <location>
        <position position="59"/>
    </location>
    <ligand>
        <name>ATP</name>
        <dbReference type="ChEBI" id="CHEBI:30616"/>
    </ligand>
</feature>
<feature type="binding site" evidence="1">
    <location>
        <position position="87"/>
    </location>
    <ligand>
        <name>ATP</name>
        <dbReference type="ChEBI" id="CHEBI:30616"/>
    </ligand>
</feature>
<feature type="binding site" evidence="1">
    <location>
        <position position="93"/>
    </location>
    <ligand>
        <name>ATP</name>
        <dbReference type="ChEBI" id="CHEBI:30616"/>
    </ligand>
</feature>
<feature type="binding site" evidence="1">
    <location>
        <position position="104"/>
    </location>
    <ligand>
        <name>ATP</name>
        <dbReference type="ChEBI" id="CHEBI:30616"/>
    </ligand>
</feature>
<feature type="binding site" evidence="1">
    <location>
        <position position="114"/>
    </location>
    <ligand>
        <name>ATP</name>
        <dbReference type="ChEBI" id="CHEBI:30616"/>
    </ligand>
</feature>
<dbReference type="EC" id="2.7.4.6" evidence="1"/>
<dbReference type="EMBL" id="CP000249">
    <property type="protein sequence ID" value="ABD10588.1"/>
    <property type="molecule type" value="Genomic_DNA"/>
</dbReference>
<dbReference type="RefSeq" id="WP_011435654.1">
    <property type="nucleotide sequence ID" value="NZ_JENI01000006.1"/>
</dbReference>
<dbReference type="SMR" id="Q2JDQ4"/>
<dbReference type="STRING" id="106370.Francci3_1210"/>
<dbReference type="KEGG" id="fra:Francci3_1210"/>
<dbReference type="eggNOG" id="COG0105">
    <property type="taxonomic scope" value="Bacteria"/>
</dbReference>
<dbReference type="HOGENOM" id="CLU_060216_6_3_11"/>
<dbReference type="OrthoDB" id="9801161at2"/>
<dbReference type="PhylomeDB" id="Q2JDQ4"/>
<dbReference type="Proteomes" id="UP000001937">
    <property type="component" value="Chromosome"/>
</dbReference>
<dbReference type="GO" id="GO:0005737">
    <property type="term" value="C:cytoplasm"/>
    <property type="evidence" value="ECO:0007669"/>
    <property type="project" value="UniProtKB-SubCell"/>
</dbReference>
<dbReference type="GO" id="GO:0005524">
    <property type="term" value="F:ATP binding"/>
    <property type="evidence" value="ECO:0007669"/>
    <property type="project" value="UniProtKB-UniRule"/>
</dbReference>
<dbReference type="GO" id="GO:0046872">
    <property type="term" value="F:metal ion binding"/>
    <property type="evidence" value="ECO:0007669"/>
    <property type="project" value="UniProtKB-KW"/>
</dbReference>
<dbReference type="GO" id="GO:0004550">
    <property type="term" value="F:nucleoside diphosphate kinase activity"/>
    <property type="evidence" value="ECO:0007669"/>
    <property type="project" value="UniProtKB-UniRule"/>
</dbReference>
<dbReference type="GO" id="GO:0006241">
    <property type="term" value="P:CTP biosynthetic process"/>
    <property type="evidence" value="ECO:0007669"/>
    <property type="project" value="UniProtKB-UniRule"/>
</dbReference>
<dbReference type="GO" id="GO:0006183">
    <property type="term" value="P:GTP biosynthetic process"/>
    <property type="evidence" value="ECO:0007669"/>
    <property type="project" value="UniProtKB-UniRule"/>
</dbReference>
<dbReference type="GO" id="GO:0006228">
    <property type="term" value="P:UTP biosynthetic process"/>
    <property type="evidence" value="ECO:0007669"/>
    <property type="project" value="UniProtKB-UniRule"/>
</dbReference>
<dbReference type="CDD" id="cd04413">
    <property type="entry name" value="NDPk_I"/>
    <property type="match status" value="1"/>
</dbReference>
<dbReference type="FunFam" id="3.30.70.141:FF:000003">
    <property type="entry name" value="Nucleoside diphosphate kinase"/>
    <property type="match status" value="1"/>
</dbReference>
<dbReference type="Gene3D" id="3.30.70.141">
    <property type="entry name" value="Nucleoside diphosphate kinase-like domain"/>
    <property type="match status" value="1"/>
</dbReference>
<dbReference type="HAMAP" id="MF_00451">
    <property type="entry name" value="NDP_kinase"/>
    <property type="match status" value="1"/>
</dbReference>
<dbReference type="InterPro" id="IPR034907">
    <property type="entry name" value="NDK-like_dom"/>
</dbReference>
<dbReference type="InterPro" id="IPR036850">
    <property type="entry name" value="NDK-like_dom_sf"/>
</dbReference>
<dbReference type="InterPro" id="IPR001564">
    <property type="entry name" value="Nucleoside_diP_kinase"/>
</dbReference>
<dbReference type="InterPro" id="IPR023005">
    <property type="entry name" value="Nucleoside_diP_kinase_AS"/>
</dbReference>
<dbReference type="NCBIfam" id="NF001908">
    <property type="entry name" value="PRK00668.1"/>
    <property type="match status" value="1"/>
</dbReference>
<dbReference type="PANTHER" id="PTHR11349">
    <property type="entry name" value="NUCLEOSIDE DIPHOSPHATE KINASE"/>
    <property type="match status" value="1"/>
</dbReference>
<dbReference type="Pfam" id="PF00334">
    <property type="entry name" value="NDK"/>
    <property type="match status" value="1"/>
</dbReference>
<dbReference type="PRINTS" id="PR01243">
    <property type="entry name" value="NUCDPKINASE"/>
</dbReference>
<dbReference type="SMART" id="SM00562">
    <property type="entry name" value="NDK"/>
    <property type="match status" value="1"/>
</dbReference>
<dbReference type="SUPFAM" id="SSF54919">
    <property type="entry name" value="Nucleoside diphosphate kinase, NDK"/>
    <property type="match status" value="1"/>
</dbReference>
<dbReference type="PROSITE" id="PS00469">
    <property type="entry name" value="NDPK"/>
    <property type="match status" value="1"/>
</dbReference>
<dbReference type="PROSITE" id="PS51374">
    <property type="entry name" value="NDPK_LIKE"/>
    <property type="match status" value="1"/>
</dbReference>
<sequence length="137" mass="14535">MSVERTLILVKPDGVSRGLVGEVVGRLERKGLTLVALELRTLERSVAETHYGEHASKPFFGELVDFITSGPLVALVAEGPRAVEASRGLIGATDPVKAAPGSLRGDYALEIGQNLVHGSDSPESAKREIDLFFPGLS</sequence>
<accession>Q2JDQ4</accession>
<evidence type="ECO:0000255" key="1">
    <source>
        <dbReference type="HAMAP-Rule" id="MF_00451"/>
    </source>
</evidence>
<name>NDK_FRACC</name>
<comment type="function">
    <text evidence="1">Major role in the synthesis of nucleoside triphosphates other than ATP. The ATP gamma phosphate is transferred to the NDP beta phosphate via a ping-pong mechanism, using a phosphorylated active-site intermediate.</text>
</comment>
<comment type="catalytic activity">
    <reaction evidence="1">
        <text>a 2'-deoxyribonucleoside 5'-diphosphate + ATP = a 2'-deoxyribonucleoside 5'-triphosphate + ADP</text>
        <dbReference type="Rhea" id="RHEA:44640"/>
        <dbReference type="ChEBI" id="CHEBI:30616"/>
        <dbReference type="ChEBI" id="CHEBI:61560"/>
        <dbReference type="ChEBI" id="CHEBI:73316"/>
        <dbReference type="ChEBI" id="CHEBI:456216"/>
        <dbReference type="EC" id="2.7.4.6"/>
    </reaction>
</comment>
<comment type="catalytic activity">
    <reaction evidence="1">
        <text>a ribonucleoside 5'-diphosphate + ATP = a ribonucleoside 5'-triphosphate + ADP</text>
        <dbReference type="Rhea" id="RHEA:18113"/>
        <dbReference type="ChEBI" id="CHEBI:30616"/>
        <dbReference type="ChEBI" id="CHEBI:57930"/>
        <dbReference type="ChEBI" id="CHEBI:61557"/>
        <dbReference type="ChEBI" id="CHEBI:456216"/>
        <dbReference type="EC" id="2.7.4.6"/>
    </reaction>
</comment>
<comment type="cofactor">
    <cofactor evidence="1">
        <name>Mg(2+)</name>
        <dbReference type="ChEBI" id="CHEBI:18420"/>
    </cofactor>
</comment>
<comment type="subunit">
    <text evidence="1">Homotetramer.</text>
</comment>
<comment type="subcellular location">
    <subcellularLocation>
        <location evidence="1">Cytoplasm</location>
    </subcellularLocation>
</comment>
<comment type="similarity">
    <text evidence="1">Belongs to the NDK family.</text>
</comment>